<accession>B2T7L1</accession>
<keyword id="KW-0963">Cytoplasm</keyword>
<keyword id="KW-0274">FAD</keyword>
<keyword id="KW-0285">Flavoprotein</keyword>
<keyword id="KW-0520">NAD</keyword>
<keyword id="KW-0819">tRNA processing</keyword>
<feature type="chain" id="PRO_1000095647" description="tRNA uridine 5-carboxymethylaminomethyl modification enzyme MnmG">
    <location>
        <begin position="1"/>
        <end position="652"/>
    </location>
</feature>
<feature type="binding site" evidence="1">
    <location>
        <begin position="13"/>
        <end position="18"/>
    </location>
    <ligand>
        <name>FAD</name>
        <dbReference type="ChEBI" id="CHEBI:57692"/>
    </ligand>
</feature>
<feature type="binding site" evidence="1">
    <location>
        <begin position="274"/>
        <end position="288"/>
    </location>
    <ligand>
        <name>NAD(+)</name>
        <dbReference type="ChEBI" id="CHEBI:57540"/>
    </ligand>
</feature>
<reference key="1">
    <citation type="journal article" date="2011" name="J. Bacteriol.">
        <title>Complete genome sequence of the plant growth-promoting endophyte Burkholderia phytofirmans strain PsJN.</title>
        <authorList>
            <person name="Weilharter A."/>
            <person name="Mitter B."/>
            <person name="Shin M.V."/>
            <person name="Chain P.S."/>
            <person name="Nowak J."/>
            <person name="Sessitsch A."/>
        </authorList>
    </citation>
    <scope>NUCLEOTIDE SEQUENCE [LARGE SCALE GENOMIC DNA]</scope>
    <source>
        <strain>DSM 17436 / LMG 22146 / PsJN</strain>
    </source>
</reference>
<name>MNMG_PARPJ</name>
<sequence length="652" mass="71568">MLFPTEFDVIVVGGGHAGTEAALASARMGNTTLLLTHNIETLGQMSCNPSIGGIGKGHLVKEVDALGGAMAAATDEGGIQFRILNSSKGPAVRATRAQADRLLYKQAIRHRLENQPNLWLFQQAVDDLMVEGDRVVGAVTQVGIRFRARAVVLTAGTFLDGKIHVGLNNYTGGRAGDPAAVSLSARLKELKLPQGRLKTGTPPRIDGRTIDFSQLEEQPGDLDPVPVFSFLGRVEQHPRQVPCWVTHTNERTHDIIRGGLDRSPMYTGVIEGVGPRYCPSIEDKIHRFASKESHQIFLEPEGLTTNEFYPNGISTSLPFDVQLELVRSMRGLEHAHILRPGYAIEYDYFDPRGLKASLETKVINGLFFAGQINGTTGYEEAAAQGLLAGINAGLFVQGKEAWCPRRDQAYLGVLVDDLVTRGVSEPYRMFTSRAEYRLSLREDNADMRLTEIGRELGVVDDIRWDAFSRKRDAVSRETERLRTTWVNPKTLPADEATPLLGKPIDHEYSLADLLRRPGVSYDGVCGLRAGACAAPEALAEDDVLLAQIKEQIEIGIKYQGYIDRQAGEIERNEAHESTRLPEGVDYAEVRGLSFEARQKLTQFRPETIGQASRISGITPAAISLLMVHLKRGLGRRPTKPAEPGADNKPVTQ</sequence>
<proteinExistence type="inferred from homology"/>
<evidence type="ECO:0000255" key="1">
    <source>
        <dbReference type="HAMAP-Rule" id="MF_00129"/>
    </source>
</evidence>
<organism>
    <name type="scientific">Paraburkholderia phytofirmans (strain DSM 17436 / LMG 22146 / PsJN)</name>
    <name type="common">Burkholderia phytofirmans</name>
    <dbReference type="NCBI Taxonomy" id="398527"/>
    <lineage>
        <taxon>Bacteria</taxon>
        <taxon>Pseudomonadati</taxon>
        <taxon>Pseudomonadota</taxon>
        <taxon>Betaproteobacteria</taxon>
        <taxon>Burkholderiales</taxon>
        <taxon>Burkholderiaceae</taxon>
        <taxon>Paraburkholderia</taxon>
    </lineage>
</organism>
<dbReference type="EMBL" id="CP001052">
    <property type="protein sequence ID" value="ACD18292.1"/>
    <property type="molecule type" value="Genomic_DNA"/>
</dbReference>
<dbReference type="RefSeq" id="WP_012434810.1">
    <property type="nucleotide sequence ID" value="NC_010681.1"/>
</dbReference>
<dbReference type="SMR" id="B2T7L1"/>
<dbReference type="STRING" id="398527.Bphyt_3905"/>
<dbReference type="KEGG" id="bpy:Bphyt_3905"/>
<dbReference type="eggNOG" id="COG0445">
    <property type="taxonomic scope" value="Bacteria"/>
</dbReference>
<dbReference type="HOGENOM" id="CLU_007831_2_2_4"/>
<dbReference type="OrthoDB" id="9815560at2"/>
<dbReference type="Proteomes" id="UP000001739">
    <property type="component" value="Chromosome 1"/>
</dbReference>
<dbReference type="GO" id="GO:0005829">
    <property type="term" value="C:cytosol"/>
    <property type="evidence" value="ECO:0007669"/>
    <property type="project" value="TreeGrafter"/>
</dbReference>
<dbReference type="GO" id="GO:0050660">
    <property type="term" value="F:flavin adenine dinucleotide binding"/>
    <property type="evidence" value="ECO:0007669"/>
    <property type="project" value="UniProtKB-UniRule"/>
</dbReference>
<dbReference type="GO" id="GO:0030488">
    <property type="term" value="P:tRNA methylation"/>
    <property type="evidence" value="ECO:0007669"/>
    <property type="project" value="TreeGrafter"/>
</dbReference>
<dbReference type="GO" id="GO:0002098">
    <property type="term" value="P:tRNA wobble uridine modification"/>
    <property type="evidence" value="ECO:0007669"/>
    <property type="project" value="InterPro"/>
</dbReference>
<dbReference type="FunFam" id="1.10.10.1800:FF:000001">
    <property type="entry name" value="tRNA uridine 5-carboxymethylaminomethyl modification enzyme MnmG"/>
    <property type="match status" value="1"/>
</dbReference>
<dbReference type="FunFam" id="1.10.150.570:FF:000001">
    <property type="entry name" value="tRNA uridine 5-carboxymethylaminomethyl modification enzyme MnmG"/>
    <property type="match status" value="1"/>
</dbReference>
<dbReference type="FunFam" id="3.50.50.60:FF:000002">
    <property type="entry name" value="tRNA uridine 5-carboxymethylaminomethyl modification enzyme MnmG"/>
    <property type="match status" value="1"/>
</dbReference>
<dbReference type="FunFam" id="3.50.50.60:FF:000010">
    <property type="entry name" value="tRNA uridine 5-carboxymethylaminomethyl modification enzyme MnmG"/>
    <property type="match status" value="1"/>
</dbReference>
<dbReference type="Gene3D" id="3.50.50.60">
    <property type="entry name" value="FAD/NAD(P)-binding domain"/>
    <property type="match status" value="2"/>
</dbReference>
<dbReference type="Gene3D" id="1.10.150.570">
    <property type="entry name" value="GidA associated domain, C-terminal subdomain"/>
    <property type="match status" value="1"/>
</dbReference>
<dbReference type="Gene3D" id="1.10.10.1800">
    <property type="entry name" value="tRNA uridine 5-carboxymethylaminomethyl modification enzyme MnmG/GidA"/>
    <property type="match status" value="1"/>
</dbReference>
<dbReference type="HAMAP" id="MF_00129">
    <property type="entry name" value="MnmG_GidA"/>
    <property type="match status" value="1"/>
</dbReference>
<dbReference type="InterPro" id="IPR036188">
    <property type="entry name" value="FAD/NAD-bd_sf"/>
</dbReference>
<dbReference type="InterPro" id="IPR049312">
    <property type="entry name" value="GIDA_C_N"/>
</dbReference>
<dbReference type="InterPro" id="IPR004416">
    <property type="entry name" value="MnmG"/>
</dbReference>
<dbReference type="InterPro" id="IPR002218">
    <property type="entry name" value="MnmG-rel"/>
</dbReference>
<dbReference type="InterPro" id="IPR020595">
    <property type="entry name" value="MnmG-rel_CS"/>
</dbReference>
<dbReference type="InterPro" id="IPR026904">
    <property type="entry name" value="MnmG_C"/>
</dbReference>
<dbReference type="InterPro" id="IPR047001">
    <property type="entry name" value="MnmG_C_subdom"/>
</dbReference>
<dbReference type="InterPro" id="IPR044920">
    <property type="entry name" value="MnmG_C_subdom_sf"/>
</dbReference>
<dbReference type="InterPro" id="IPR040131">
    <property type="entry name" value="MnmG_N"/>
</dbReference>
<dbReference type="NCBIfam" id="TIGR00136">
    <property type="entry name" value="mnmG_gidA"/>
    <property type="match status" value="1"/>
</dbReference>
<dbReference type="PANTHER" id="PTHR11806">
    <property type="entry name" value="GLUCOSE INHIBITED DIVISION PROTEIN A"/>
    <property type="match status" value="1"/>
</dbReference>
<dbReference type="PANTHER" id="PTHR11806:SF0">
    <property type="entry name" value="PROTEIN MTO1 HOMOLOG, MITOCHONDRIAL"/>
    <property type="match status" value="1"/>
</dbReference>
<dbReference type="Pfam" id="PF01134">
    <property type="entry name" value="GIDA"/>
    <property type="match status" value="1"/>
</dbReference>
<dbReference type="Pfam" id="PF21680">
    <property type="entry name" value="GIDA_C_1st"/>
    <property type="match status" value="1"/>
</dbReference>
<dbReference type="Pfam" id="PF13932">
    <property type="entry name" value="SAM_GIDA_C"/>
    <property type="match status" value="1"/>
</dbReference>
<dbReference type="SMART" id="SM01228">
    <property type="entry name" value="GIDA_assoc_3"/>
    <property type="match status" value="1"/>
</dbReference>
<dbReference type="SUPFAM" id="SSF51905">
    <property type="entry name" value="FAD/NAD(P)-binding domain"/>
    <property type="match status" value="1"/>
</dbReference>
<dbReference type="PROSITE" id="PS01280">
    <property type="entry name" value="GIDA_1"/>
    <property type="match status" value="1"/>
</dbReference>
<dbReference type="PROSITE" id="PS01281">
    <property type="entry name" value="GIDA_2"/>
    <property type="match status" value="1"/>
</dbReference>
<gene>
    <name evidence="1" type="primary">mnmG</name>
    <name evidence="1" type="synonym">gidA</name>
    <name type="ordered locus">Bphyt_3905</name>
</gene>
<protein>
    <recommendedName>
        <fullName evidence="1">tRNA uridine 5-carboxymethylaminomethyl modification enzyme MnmG</fullName>
    </recommendedName>
    <alternativeName>
        <fullName evidence="1">Glucose-inhibited division protein A</fullName>
    </alternativeName>
</protein>
<comment type="function">
    <text evidence="1">NAD-binding protein involved in the addition of a carboxymethylaminomethyl (cmnm) group at the wobble position (U34) of certain tRNAs, forming tRNA-cmnm(5)s(2)U34.</text>
</comment>
<comment type="cofactor">
    <cofactor evidence="1">
        <name>FAD</name>
        <dbReference type="ChEBI" id="CHEBI:57692"/>
    </cofactor>
</comment>
<comment type="subunit">
    <text evidence="1">Homodimer. Heterotetramer of two MnmE and two MnmG subunits.</text>
</comment>
<comment type="subcellular location">
    <subcellularLocation>
        <location evidence="1">Cytoplasm</location>
    </subcellularLocation>
</comment>
<comment type="similarity">
    <text evidence="1">Belongs to the MnmG family.</text>
</comment>